<dbReference type="EC" id="2.5.1.141" evidence="1"/>
<dbReference type="EMBL" id="CP000250">
    <property type="protein sequence ID" value="ABD09269.1"/>
    <property type="molecule type" value="Genomic_DNA"/>
</dbReference>
<dbReference type="RefSeq" id="WP_011443451.1">
    <property type="nucleotide sequence ID" value="NC_007778.1"/>
</dbReference>
<dbReference type="SMR" id="Q2IR91"/>
<dbReference type="STRING" id="316058.RPB_4586"/>
<dbReference type="KEGG" id="rpb:RPB_4586"/>
<dbReference type="eggNOG" id="COG0109">
    <property type="taxonomic scope" value="Bacteria"/>
</dbReference>
<dbReference type="HOGENOM" id="CLU_029631_0_2_5"/>
<dbReference type="OrthoDB" id="9814417at2"/>
<dbReference type="UniPathway" id="UPA00834">
    <property type="reaction ID" value="UER00712"/>
</dbReference>
<dbReference type="Proteomes" id="UP000008809">
    <property type="component" value="Chromosome"/>
</dbReference>
<dbReference type="GO" id="GO:0005886">
    <property type="term" value="C:plasma membrane"/>
    <property type="evidence" value="ECO:0007669"/>
    <property type="project" value="UniProtKB-SubCell"/>
</dbReference>
<dbReference type="GO" id="GO:0008495">
    <property type="term" value="F:protoheme IX farnesyltransferase activity"/>
    <property type="evidence" value="ECO:0007669"/>
    <property type="project" value="UniProtKB-UniRule"/>
</dbReference>
<dbReference type="GO" id="GO:0048034">
    <property type="term" value="P:heme O biosynthetic process"/>
    <property type="evidence" value="ECO:0007669"/>
    <property type="project" value="UniProtKB-UniRule"/>
</dbReference>
<dbReference type="CDD" id="cd13957">
    <property type="entry name" value="PT_UbiA_Cox10"/>
    <property type="match status" value="1"/>
</dbReference>
<dbReference type="FunFam" id="1.10.357.140:FF:000001">
    <property type="entry name" value="Protoheme IX farnesyltransferase"/>
    <property type="match status" value="1"/>
</dbReference>
<dbReference type="Gene3D" id="1.10.357.140">
    <property type="entry name" value="UbiA prenyltransferase"/>
    <property type="match status" value="1"/>
</dbReference>
<dbReference type="HAMAP" id="MF_00154">
    <property type="entry name" value="CyoE_CtaB"/>
    <property type="match status" value="1"/>
</dbReference>
<dbReference type="InterPro" id="IPR006369">
    <property type="entry name" value="Protohaem_IX_farnesylTrfase"/>
</dbReference>
<dbReference type="InterPro" id="IPR000537">
    <property type="entry name" value="UbiA_prenyltransferase"/>
</dbReference>
<dbReference type="InterPro" id="IPR030470">
    <property type="entry name" value="UbiA_prenylTrfase_CS"/>
</dbReference>
<dbReference type="InterPro" id="IPR044878">
    <property type="entry name" value="UbiA_sf"/>
</dbReference>
<dbReference type="NCBIfam" id="TIGR01473">
    <property type="entry name" value="cyoE_ctaB"/>
    <property type="match status" value="1"/>
</dbReference>
<dbReference type="NCBIfam" id="NF003349">
    <property type="entry name" value="PRK04375.1-2"/>
    <property type="match status" value="1"/>
</dbReference>
<dbReference type="PANTHER" id="PTHR43448:SF7">
    <property type="entry name" value="4-HYDROXYBENZOATE SOLANESYLTRANSFERASE"/>
    <property type="match status" value="1"/>
</dbReference>
<dbReference type="PANTHER" id="PTHR43448">
    <property type="entry name" value="PROTOHEME IX FARNESYLTRANSFERASE, MITOCHONDRIAL"/>
    <property type="match status" value="1"/>
</dbReference>
<dbReference type="Pfam" id="PF01040">
    <property type="entry name" value="UbiA"/>
    <property type="match status" value="1"/>
</dbReference>
<dbReference type="PROSITE" id="PS00943">
    <property type="entry name" value="UBIA"/>
    <property type="match status" value="1"/>
</dbReference>
<protein>
    <recommendedName>
        <fullName evidence="1">Protoheme IX farnesyltransferase</fullName>
        <ecNumber evidence="1">2.5.1.141</ecNumber>
    </recommendedName>
    <alternativeName>
        <fullName evidence="1">Heme B farnesyltransferase</fullName>
    </alternativeName>
    <alternativeName>
        <fullName evidence="1">Heme O synthase</fullName>
    </alternativeName>
</protein>
<feature type="chain" id="PRO_0000327143" description="Protoheme IX farnesyltransferase">
    <location>
        <begin position="1"/>
        <end position="313"/>
    </location>
</feature>
<feature type="transmembrane region" description="Helical" evidence="1">
    <location>
        <begin position="32"/>
        <end position="52"/>
    </location>
</feature>
<feature type="transmembrane region" description="Helical" evidence="1">
    <location>
        <begin position="53"/>
        <end position="73"/>
    </location>
</feature>
<feature type="transmembrane region" description="Helical" evidence="1">
    <location>
        <begin position="120"/>
        <end position="140"/>
    </location>
</feature>
<feature type="transmembrane region" description="Helical" evidence="1">
    <location>
        <begin position="153"/>
        <end position="173"/>
    </location>
</feature>
<feature type="transmembrane region" description="Helical" evidence="1">
    <location>
        <begin position="180"/>
        <end position="200"/>
    </location>
</feature>
<feature type="transmembrane region" description="Helical" evidence="1">
    <location>
        <begin position="226"/>
        <end position="246"/>
    </location>
</feature>
<feature type="transmembrane region" description="Helical" evidence="1">
    <location>
        <begin position="248"/>
        <end position="268"/>
    </location>
</feature>
<feature type="transmembrane region" description="Helical" evidence="1">
    <location>
        <begin position="284"/>
        <end position="304"/>
    </location>
</feature>
<accession>Q2IR91</accession>
<sequence>MSVIDTNQIDLVAPRISEAGVADYIALLKPRVMSLVVFTALVGMLLAPGDFHPVLAITAMLCIAVGGGAAGALNMWYEDDIDGQMTRTANRPIPRGRVTRPEALTFGITLSFFSVMTLGILVNWVAGALLAFTIFFYVVIYTMWLKRSTAQNIVIGGAAGALPPVVAWAAVTGSLAVEPLLLFAIIFFWTPPHFWALALFRNDDYARAGVPMLPVVAGQDHTRLQILLYTIVLVAVAAAPWPLGYFSAIYGVASLALGGWMLVLALRVYRHRTGSAALRATRNLFKFSILYLFALFSILLLEVVAKAVWRLFA</sequence>
<reference key="1">
    <citation type="submission" date="2006-01" db="EMBL/GenBank/DDBJ databases">
        <title>Complete sequence of Rhodopseudomonas palustris HaA2.</title>
        <authorList>
            <consortium name="US DOE Joint Genome Institute"/>
            <person name="Copeland A."/>
            <person name="Lucas S."/>
            <person name="Lapidus A."/>
            <person name="Barry K."/>
            <person name="Detter J.C."/>
            <person name="Glavina T."/>
            <person name="Hammon N."/>
            <person name="Israni S."/>
            <person name="Pitluck S."/>
            <person name="Chain P."/>
            <person name="Malfatti S."/>
            <person name="Shin M."/>
            <person name="Vergez L."/>
            <person name="Schmutz J."/>
            <person name="Larimer F."/>
            <person name="Land M."/>
            <person name="Hauser L."/>
            <person name="Pelletier D.A."/>
            <person name="Kyrpides N."/>
            <person name="Anderson I."/>
            <person name="Oda Y."/>
            <person name="Harwood C.S."/>
            <person name="Richardson P."/>
        </authorList>
    </citation>
    <scope>NUCLEOTIDE SEQUENCE [LARGE SCALE GENOMIC DNA]</scope>
    <source>
        <strain>HaA2</strain>
    </source>
</reference>
<evidence type="ECO:0000255" key="1">
    <source>
        <dbReference type="HAMAP-Rule" id="MF_00154"/>
    </source>
</evidence>
<organism>
    <name type="scientific">Rhodopseudomonas palustris (strain HaA2)</name>
    <dbReference type="NCBI Taxonomy" id="316058"/>
    <lineage>
        <taxon>Bacteria</taxon>
        <taxon>Pseudomonadati</taxon>
        <taxon>Pseudomonadota</taxon>
        <taxon>Alphaproteobacteria</taxon>
        <taxon>Hyphomicrobiales</taxon>
        <taxon>Nitrobacteraceae</taxon>
        <taxon>Rhodopseudomonas</taxon>
    </lineage>
</organism>
<gene>
    <name evidence="1" type="primary">ctaB</name>
    <name type="ordered locus">RPB_4586</name>
</gene>
<keyword id="KW-0997">Cell inner membrane</keyword>
<keyword id="KW-1003">Cell membrane</keyword>
<keyword id="KW-0350">Heme biosynthesis</keyword>
<keyword id="KW-0472">Membrane</keyword>
<keyword id="KW-1185">Reference proteome</keyword>
<keyword id="KW-0808">Transferase</keyword>
<keyword id="KW-0812">Transmembrane</keyword>
<keyword id="KW-1133">Transmembrane helix</keyword>
<proteinExistence type="inferred from homology"/>
<name>COXX_RHOP2</name>
<comment type="function">
    <text evidence="1">Converts heme B (protoheme IX) to heme O by substitution of the vinyl group on carbon 2 of heme B porphyrin ring with a hydroxyethyl farnesyl side group.</text>
</comment>
<comment type="catalytic activity">
    <reaction evidence="1">
        <text>heme b + (2E,6E)-farnesyl diphosphate + H2O = Fe(II)-heme o + diphosphate</text>
        <dbReference type="Rhea" id="RHEA:28070"/>
        <dbReference type="ChEBI" id="CHEBI:15377"/>
        <dbReference type="ChEBI" id="CHEBI:33019"/>
        <dbReference type="ChEBI" id="CHEBI:60344"/>
        <dbReference type="ChEBI" id="CHEBI:60530"/>
        <dbReference type="ChEBI" id="CHEBI:175763"/>
        <dbReference type="EC" id="2.5.1.141"/>
    </reaction>
</comment>
<comment type="pathway">
    <text evidence="1">Porphyrin-containing compound metabolism; heme O biosynthesis; heme O from protoheme: step 1/1.</text>
</comment>
<comment type="subcellular location">
    <subcellularLocation>
        <location evidence="1">Cell inner membrane</location>
        <topology evidence="1">Multi-pass membrane protein</topology>
    </subcellularLocation>
</comment>
<comment type="miscellaneous">
    <text evidence="1">Carbon 2 of the heme B porphyrin ring is defined according to the Fischer nomenclature.</text>
</comment>
<comment type="similarity">
    <text evidence="1">Belongs to the UbiA prenyltransferase family. Protoheme IX farnesyltransferase subfamily.</text>
</comment>